<dbReference type="EC" id="2.1.1.177" evidence="1"/>
<dbReference type="EMBL" id="AF181950">
    <property type="protein sequence ID" value="AAF85653.1"/>
    <property type="molecule type" value="Genomic_DNA"/>
</dbReference>
<dbReference type="EMBL" id="D86934">
    <property type="protein sequence ID" value="BAA82243.1"/>
    <property type="molecule type" value="Genomic_DNA"/>
</dbReference>
<dbReference type="EMBL" id="AB033763">
    <property type="protein sequence ID" value="BAA86653.1"/>
    <property type="molecule type" value="Genomic_DNA"/>
</dbReference>
<dbReference type="EMBL" id="AB037671">
    <property type="protein sequence ID" value="BAB47681.1"/>
    <property type="molecule type" value="Genomic_DNA"/>
</dbReference>
<dbReference type="EMBL" id="AB038513">
    <property type="protein sequence ID" value="BAC53844.1"/>
    <property type="molecule type" value="Genomic_DNA"/>
</dbReference>
<dbReference type="EMBL" id="AB047089">
    <property type="protein sequence ID" value="BAC57492.1"/>
    <property type="molecule type" value="Genomic_DNA"/>
</dbReference>
<dbReference type="EMBL" id="AB047239">
    <property type="protein sequence ID" value="BAB47141.1"/>
    <property type="molecule type" value="Genomic_DNA"/>
</dbReference>
<dbReference type="EMBL" id="AB063172">
    <property type="protein sequence ID" value="BAB72121.1"/>
    <property type="molecule type" value="Genomic_DNA"/>
</dbReference>
<dbReference type="EMBL" id="AB063173">
    <property type="protein sequence ID" value="BAB72138.1"/>
    <property type="molecule type" value="Genomic_DNA"/>
</dbReference>
<dbReference type="EMBL" id="AB096217">
    <property type="protein sequence ID" value="BAC67575.1"/>
    <property type="molecule type" value="Genomic_DNA"/>
</dbReference>
<dbReference type="RefSeq" id="WP_000704775.1">
    <property type="nucleotide sequence ID" value="NZ_WYDB01000001.1"/>
</dbReference>
<dbReference type="PDB" id="1VH0">
    <property type="method" value="X-ray"/>
    <property type="resolution" value="2.31 A"/>
    <property type="chains" value="A/B/C/D/E/F=2-159"/>
</dbReference>
<dbReference type="PDB" id="4FAK">
    <property type="method" value="X-ray"/>
    <property type="resolution" value="1.70 A"/>
    <property type="chains" value="A=1-159"/>
</dbReference>
<dbReference type="PDBsum" id="1VH0"/>
<dbReference type="PDBsum" id="4FAK"/>
<dbReference type="SMR" id="P0C1V0"/>
<dbReference type="GeneID" id="98344407"/>
<dbReference type="OMA" id="NEPYHHQ"/>
<dbReference type="OrthoDB" id="9806643at2"/>
<dbReference type="EvolutionaryTrace" id="P0C1V0"/>
<dbReference type="GO" id="GO:0005737">
    <property type="term" value="C:cytoplasm"/>
    <property type="evidence" value="ECO:0007669"/>
    <property type="project" value="UniProtKB-SubCell"/>
</dbReference>
<dbReference type="GO" id="GO:0070038">
    <property type="term" value="F:rRNA (pseudouridine-N3-)-methyltransferase activity"/>
    <property type="evidence" value="ECO:0007669"/>
    <property type="project" value="UniProtKB-UniRule"/>
</dbReference>
<dbReference type="CDD" id="cd18081">
    <property type="entry name" value="RlmH-like"/>
    <property type="match status" value="1"/>
</dbReference>
<dbReference type="Gene3D" id="3.40.1280.10">
    <property type="match status" value="1"/>
</dbReference>
<dbReference type="HAMAP" id="MF_00658">
    <property type="entry name" value="23SrRNA_methyltr_H"/>
    <property type="match status" value="1"/>
</dbReference>
<dbReference type="InterPro" id="IPR029028">
    <property type="entry name" value="Alpha/beta_knot_MTases"/>
</dbReference>
<dbReference type="InterPro" id="IPR003742">
    <property type="entry name" value="RlmH-like"/>
</dbReference>
<dbReference type="InterPro" id="IPR029026">
    <property type="entry name" value="tRNA_m1G_MTases_N"/>
</dbReference>
<dbReference type="NCBIfam" id="NF000985">
    <property type="entry name" value="PRK00103.1-3"/>
    <property type="match status" value="1"/>
</dbReference>
<dbReference type="NCBIfam" id="NF000986">
    <property type="entry name" value="PRK00103.1-4"/>
    <property type="match status" value="1"/>
</dbReference>
<dbReference type="NCBIfam" id="TIGR00246">
    <property type="entry name" value="tRNA_RlmH_YbeA"/>
    <property type="match status" value="1"/>
</dbReference>
<dbReference type="PANTHER" id="PTHR33603">
    <property type="entry name" value="METHYLTRANSFERASE"/>
    <property type="match status" value="1"/>
</dbReference>
<dbReference type="PANTHER" id="PTHR33603:SF1">
    <property type="entry name" value="RIBOSOMAL RNA LARGE SUBUNIT METHYLTRANSFERASE H"/>
    <property type="match status" value="1"/>
</dbReference>
<dbReference type="Pfam" id="PF02590">
    <property type="entry name" value="SPOUT_MTase"/>
    <property type="match status" value="1"/>
</dbReference>
<dbReference type="PIRSF" id="PIRSF004505">
    <property type="entry name" value="MT_bac"/>
    <property type="match status" value="1"/>
</dbReference>
<dbReference type="SUPFAM" id="SSF75217">
    <property type="entry name" value="alpha/beta knot"/>
    <property type="match status" value="1"/>
</dbReference>
<evidence type="ECO:0000255" key="1">
    <source>
        <dbReference type="HAMAP-Rule" id="MF_00658"/>
    </source>
</evidence>
<evidence type="ECO:0000269" key="2">
    <source>
    </source>
</evidence>
<evidence type="ECO:0007744" key="3">
    <source>
        <dbReference type="PDB" id="1VH0"/>
    </source>
</evidence>
<evidence type="ECO:0007744" key="4">
    <source>
        <dbReference type="PDB" id="4FAK"/>
    </source>
</evidence>
<evidence type="ECO:0007829" key="5">
    <source>
        <dbReference type="PDB" id="4FAK"/>
    </source>
</evidence>
<proteinExistence type="evidence at protein level"/>
<feature type="chain" id="PRO_0000198181" description="Ribosomal RNA large subunit methyltransferase H">
    <location>
        <begin position="1"/>
        <end position="159"/>
    </location>
</feature>
<feature type="binding site" evidence="1 2 4">
    <location>
        <position position="76"/>
    </location>
    <ligand>
        <name>S-adenosyl-L-methionine</name>
        <dbReference type="ChEBI" id="CHEBI:59789"/>
    </ligand>
</feature>
<feature type="binding site" evidence="1 2 4">
    <location>
        <position position="108"/>
    </location>
    <ligand>
        <name>S-adenosyl-L-methionine</name>
        <dbReference type="ChEBI" id="CHEBI:59789"/>
    </ligand>
</feature>
<feature type="binding site" evidence="1 2 4">
    <location>
        <begin position="127"/>
        <end position="132"/>
    </location>
    <ligand>
        <name>S-adenosyl-L-methionine</name>
        <dbReference type="ChEBI" id="CHEBI:59789"/>
    </ligand>
</feature>
<feature type="mutagenesis site" description="30% decrease in methyltransferase activity." evidence="2">
    <original>E</original>
    <variation>A</variation>
    <location>
        <position position="77"/>
    </location>
</feature>
<feature type="strand" evidence="5">
    <location>
        <begin position="2"/>
        <end position="9"/>
    </location>
</feature>
<feature type="helix" evidence="5">
    <location>
        <begin position="14"/>
        <end position="27"/>
    </location>
</feature>
<feature type="turn" evidence="5">
    <location>
        <begin position="28"/>
        <end position="30"/>
    </location>
</feature>
<feature type="strand" evidence="5">
    <location>
        <begin position="32"/>
        <end position="38"/>
    </location>
</feature>
<feature type="helix" evidence="5">
    <location>
        <begin position="49"/>
        <end position="65"/>
    </location>
</feature>
<feature type="strand" evidence="5">
    <location>
        <begin position="71"/>
        <end position="76"/>
    </location>
</feature>
<feature type="strand" evidence="5">
    <location>
        <begin position="80"/>
        <end position="82"/>
    </location>
</feature>
<feature type="helix" evidence="5">
    <location>
        <begin position="85"/>
        <end position="97"/>
    </location>
</feature>
<feature type="strand" evidence="5">
    <location>
        <begin position="102"/>
        <end position="107"/>
    </location>
</feature>
<feature type="helix" evidence="5">
    <location>
        <begin position="115"/>
        <end position="120"/>
    </location>
</feature>
<feature type="strand" evidence="5">
    <location>
        <begin position="122"/>
        <end position="127"/>
    </location>
</feature>
<feature type="helix" evidence="5">
    <location>
        <begin position="134"/>
        <end position="153"/>
    </location>
</feature>
<gene>
    <name evidence="1" type="primary">rlmH</name>
</gene>
<sequence length="159" mass="18306">MKITILAVGKLKEKYWKQAIAEYEKRLGPYTKIDIIEVPDEKAPENMSDKEIEQVKEKEGQRILAKIKPQSTVITLEIQGKMLSSEGLAQELNQRMTQGQSDFVFVIGGSNGLHKDVLQRSNYALSFSKMTFPHQMMRVVLIEQVYRAFKIMRGEAYHK</sequence>
<protein>
    <recommendedName>
        <fullName evidence="1">Ribosomal RNA large subunit methyltransferase H</fullName>
        <ecNumber evidence="1">2.1.1.177</ecNumber>
    </recommendedName>
    <alternativeName>
        <fullName evidence="1">23S rRNA (pseudouridine1915-N3)-methyltransferase</fullName>
    </alternativeName>
    <alternativeName>
        <fullName evidence="1">23S rRNA m3Psi1915 methyltransferase</fullName>
    </alternativeName>
    <alternativeName>
        <fullName evidence="1">rRNA (pseudouridine-N3-)-methyltransferase RlmH</fullName>
    </alternativeName>
</protein>
<organism>
    <name type="scientific">Staphylococcus aureus</name>
    <dbReference type="NCBI Taxonomy" id="1280"/>
    <lineage>
        <taxon>Bacteria</taxon>
        <taxon>Bacillati</taxon>
        <taxon>Bacillota</taxon>
        <taxon>Bacilli</taxon>
        <taxon>Bacillales</taxon>
        <taxon>Staphylococcaceae</taxon>
        <taxon>Staphylococcus</taxon>
    </lineage>
</organism>
<keyword id="KW-0002">3D-structure</keyword>
<keyword id="KW-0963">Cytoplasm</keyword>
<keyword id="KW-0489">Methyltransferase</keyword>
<keyword id="KW-0698">rRNA processing</keyword>
<keyword id="KW-0949">S-adenosyl-L-methionine</keyword>
<keyword id="KW-0808">Transferase</keyword>
<reference key="1">
    <citation type="journal article" date="2000" name="Antimicrob. Agents Chemother.">
        <title>Genetic organization of the downstream region of the mecA element in methicillin-resistant Staphylococcus aureus isolates carrying different polymorphisms of this region.</title>
        <authorList>
            <person name="Oliveira D.C."/>
            <person name="Wu S.W."/>
            <person name="de Lencastre H."/>
        </authorList>
    </citation>
    <scope>NUCLEOTIDE SEQUENCE [GENOMIC DNA]</scope>
    <source>
        <strain>HUC19</strain>
    </source>
</reference>
<reference key="2">
    <citation type="journal article" date="2001" name="Antimicrob. Agents Chemother.">
        <title>Structural comparison of three types of staphylococcal cassette chromosome mec integrated in the chromosome in methicillin-resistant Staphylococcus aureus.</title>
        <authorList>
            <person name="Ito T."/>
            <person name="Katayama Y."/>
            <person name="Asada K."/>
            <person name="Mori N."/>
            <person name="Tsutsumimoto K."/>
        </authorList>
    </citation>
    <scope>NUCLEOTIDE SEQUENCE [GENOMIC DNA]</scope>
    <source>
        <strain>85/2082</strain>
        <strain>85/3907</strain>
        <strain>ATCC 25923 / DSM 1104 / JCM 2413 / NBRC 14462 / NCIMB 12702 / NCTC 12981 / Seattle 1945</strain>
        <strain>NCTC 10442</strain>
    </source>
</reference>
<reference key="3">
    <citation type="journal article" date="2002" name="Antimicrob. Agents Chemother.">
        <title>Novel type of staphylococcal cassette chromosome mec identified in community-acquired methicillin-resistant Staphylococcus aureus strains.</title>
        <authorList>
            <person name="Ma X.X."/>
            <person name="Ito T."/>
            <person name="Tiensasitorn C."/>
            <person name="Jamklang M."/>
            <person name="Chongtrakool P."/>
            <person name="Boyle-Vavra S."/>
            <person name="Daum R.S."/>
            <person name="Hiramatsu K."/>
        </authorList>
    </citation>
    <scope>NUCLEOTIDE SEQUENCE [GENOMIC DNA]</scope>
    <source>
        <strain>CA05(JCSC1968)</strain>
        <strain>JCSC1978(8/6-3P)</strain>
    </source>
</reference>
<reference key="4">
    <citation type="journal article" date="2003" name="Drug Resist. Updat.">
        <title>Insights on antibiotic resistance of Staphylococcus aureus from its whole genome: genomic island SCC.</title>
        <authorList>
            <person name="Ito T."/>
            <person name="Okuma K."/>
            <person name="Ma X.X."/>
            <person name="Yuzawa H."/>
            <person name="Hiramatsu K."/>
        </authorList>
    </citation>
    <scope>NUCLEOTIDE SEQUENCE [GENOMIC DNA]</scope>
    <source>
        <strain>MR108</strain>
    </source>
</reference>
<reference evidence="3" key="5">
    <citation type="journal article" date="2005" name="Proteins">
        <title>Structural analysis of a set of proteins resulting from a bacterial genomics project.</title>
        <authorList>
            <person name="Badger J."/>
            <person name="Sauder J.M."/>
            <person name="Adams J.M."/>
            <person name="Antonysamy S."/>
            <person name="Bain K."/>
            <person name="Bergseid M.G."/>
            <person name="Buchanan S.G."/>
            <person name="Buchanan M.D."/>
            <person name="Batiyenko Y."/>
            <person name="Christopher J.A."/>
            <person name="Emtage S."/>
            <person name="Eroshkina A."/>
            <person name="Feil I."/>
            <person name="Furlong E.B."/>
            <person name="Gajiwala K.S."/>
            <person name="Gao X."/>
            <person name="He D."/>
            <person name="Hendle J."/>
            <person name="Huber A."/>
            <person name="Hoda K."/>
            <person name="Kearins P."/>
            <person name="Kissinger C."/>
            <person name="Laubert B."/>
            <person name="Lewis H.A."/>
            <person name="Lin J."/>
            <person name="Loomis K."/>
            <person name="Lorimer D."/>
            <person name="Louie G."/>
            <person name="Maletic M."/>
            <person name="Marsh C.D."/>
            <person name="Miller I."/>
            <person name="Molinari J."/>
            <person name="Muller-Dieckmann H.J."/>
            <person name="Newman J.M."/>
            <person name="Noland B.W."/>
            <person name="Pagarigan B."/>
            <person name="Park F."/>
            <person name="Peat T.S."/>
            <person name="Post K.W."/>
            <person name="Radojicic S."/>
            <person name="Ramos A."/>
            <person name="Romero R."/>
            <person name="Rutter M.E."/>
            <person name="Sanderson W.E."/>
            <person name="Schwinn K.D."/>
            <person name="Tresser J."/>
            <person name="Winhoven J."/>
            <person name="Wright T.A."/>
            <person name="Wu L."/>
            <person name="Xu J."/>
            <person name="Harris T.J.R."/>
        </authorList>
    </citation>
    <scope>X-RAY CRYSTALLOGRAPHY (2.31 ANGSTROMS) OF 2-159</scope>
</reference>
<reference key="6">
    <citation type="journal article" date="2006" name="BMC Bioinformatics">
        <title>PDB-UF: database of predicted enzymatic functions for unannotated protein structures from structural genomics.</title>
        <authorList>
            <person name="von Grotthuss M."/>
            <person name="Plewczynski D."/>
            <person name="Ginalski K."/>
            <person name="Rychlewski L."/>
            <person name="Shakhnovich E.I."/>
        </authorList>
    </citation>
    <scope>X-RAY CRYSTALLOGRAPHY (2.31 ANGSTROMS) OF 2-159</scope>
</reference>
<reference evidence="4" key="7">
    <citation type="journal article" date="2013" name="J. Biol. Chem.">
        <title>Characterization of the Staphylococcus aureus rRNA methyltransferase encoded by orfX, the gene containing the staphylococcal chromosome cassette mec (SCCmec) insertion site.</title>
        <authorList>
            <person name="Boundy S."/>
            <person name="Safo M.K."/>
            <person name="Wang L."/>
            <person name="Musayev F.N."/>
            <person name="O'Farrell H.C."/>
            <person name="Rife J.P."/>
            <person name="Archer G.L."/>
        </authorList>
    </citation>
    <scope>X-RAY CRYSTALLOGRAPHY (1.70 ANGSTROMS) IN COMPLEX WITH S-ADENOSYL-L-METHIONINE</scope>
    <scope>FUNCTION AS A METHYLTRANSFERASE</scope>
    <scope>SUBUNIT</scope>
    <scope>MUTAGENESIS OF GLU-77</scope>
</reference>
<accession>P0C1V0</accession>
<accession>P0A0N8</accession>
<accession>Q9WVW7</accession>
<name>RLMH_STAAU</name>
<comment type="function">
    <text evidence="1 2">Specifically methylates the pseudouridine at position 1915 (m3Psi1915) in 23S rRNA (By similarity). Specific for fully assembled 70S ribosomes (PubMed:23150671).</text>
</comment>
<comment type="catalytic activity">
    <reaction evidence="1">
        <text>pseudouridine(1915) in 23S rRNA + S-adenosyl-L-methionine = N(3)-methylpseudouridine(1915) in 23S rRNA + S-adenosyl-L-homocysteine + H(+)</text>
        <dbReference type="Rhea" id="RHEA:42752"/>
        <dbReference type="Rhea" id="RHEA-COMP:10221"/>
        <dbReference type="Rhea" id="RHEA-COMP:10222"/>
        <dbReference type="ChEBI" id="CHEBI:15378"/>
        <dbReference type="ChEBI" id="CHEBI:57856"/>
        <dbReference type="ChEBI" id="CHEBI:59789"/>
        <dbReference type="ChEBI" id="CHEBI:65314"/>
        <dbReference type="ChEBI" id="CHEBI:74486"/>
        <dbReference type="EC" id="2.1.1.177"/>
    </reaction>
</comment>
<comment type="subunit">
    <text evidence="1 2">Homodimer.</text>
</comment>
<comment type="subcellular location">
    <subcellularLocation>
        <location evidence="1">Cytoplasm</location>
    </subcellularLocation>
</comment>
<comment type="similarity">
    <text evidence="1">Belongs to the RNA methyltransferase RlmH family.</text>
</comment>